<sequence length="1275" mass="141880">MKRIPRKTKGKSSGKGNDSTERSDDGSSQLRDKQNNKAGPATTEPGTSNREQYRARPGIASVQRATESAELPMKNNDEGTPDKKGNTRGDLVNEHSEAKDEADEATQKQAKDTDKSKAQVTYSDTGINNANELSRSGNVDNEGGSNQKPMSTRIAEATSAIVSKHPARVGLPPTASSGHGYQCHVCSAVLFSPLDLDAHVASHGLHGNMTLTSSEIQRHITEFISSWQNHPIVQVSADVENKKTAQLLHADTPRLVTWDAGLCTSFKIVPIVPAQVPQDVLAYTFFTSSYAIQSPFPEAAVSRIVVHTRWASNVDFDRDSSVIMAPPTENNIHLFKQLLNTETLSVRGANPLMFRANVLHMLLEFVLDNLYLNRHTGFSQDHTPFTEGANLRSLPGPDAEKWYSIMYPTRMGTPNVSKICNFVASCVRNRVGRFDRAQMMNGAMSEWVDVFETSDALTVSIRGRWMARLARMNINPTEIEWALTECAQGYVTVTSPYAPSVNRLMPYRISNAERQISQIIRIMNIGNNATVIQPVLQDISVLLQRISPLQIDPTIISNTMSTVSESTTQTLSPASSILGKLRPSNSDFSSFRVALAGWLYNGVVTTVIDDSSYPKDGGSVTSLENLWDFFILALALPLTTDPCAPVKAFMTLANMMVGFETIPMDNQIYTQSRRASAFSTPHTWPRCFMNIQLISPIDAPILRQWAEIIHRYWPNPSQIRYGAPNVFGSANLFTPPEVLLLPIDHQPANVTTPTLDFTNELTNWRARVCELMKNLVDNQRYQPGWTQSLVSSMRGTLDKLKLIKSMTPMYLQQLAPVELAVIAPMLPFPPFQVPYVRLDRDRVPTMVGVTRQSRDTITQPALSLSTTNTTVGVPLALDARAITVALLSGKYPPDLVTNVWYADAIYPMYADTEVFSNLQRDMITCEAVQTLVTLVAQISETQYPVDRYLDWIPSLRASAATAATFAEWVNTSMKTAFDLSDMLLEPLLSGDPRMTQLAIQYQQYNGRTFNVIPEMPGSVIADCVQLTAEVFNHEYNLFGIARGDIIIGRVQSTHLWSPLAPPPDLVFDRDTPGVHIFGRDCRISFGMNGAAPMIRDETGMMVPFEGNWIFPLALWQMNTRYFNQQFDAWIKTGELRIRIEMGAYPYMLHYYDPRQYANAWNLTSAWLEEITPTSIPSVPFMVPISSDHDISSAPAVQYIISTEYNDRSLFCTNSSSPQTIAGPDKHIPVERYNILTNPDAPPTQIQLPEVVDLYNVVTRYAYETPPITAVVMGVP</sequence>
<protein>
    <recommendedName>
        <fullName>Inner capsid protein lambda-1</fullName>
        <shortName>Lambda1</shortName>
        <ecNumber>3.6.4.13</ecNumber>
    </recommendedName>
    <alternativeName>
        <fullName>ATP-dependent DNA helicase lambda-1</fullName>
    </alternativeName>
    <alternativeName>
        <fullName>Lambda1(Hel)</fullName>
    </alternativeName>
</protein>
<accession>Q9WAB2</accession>
<reference key="1">
    <citation type="journal article" date="1999" name="Virology">
        <title>Mammalian reovirus L3 gene sequences and evidence for a distinct amino-terminal region of the lambda1 protein.</title>
        <authorList>
            <person name="Harrison S.J."/>
            <person name="Farsetta D.L."/>
            <person name="Kim J."/>
            <person name="Noble S."/>
            <person name="Broering T.J."/>
            <person name="Nibert M.L."/>
        </authorList>
    </citation>
    <scope>NUCLEOTIDE SEQUENCE [MRNA]</scope>
</reference>
<reference key="2">
    <citation type="journal article" date="2004" name="J. Virol.">
        <title>Reovirus nonstructural protein mu NS recruits viral core surface proteins and entering core particles to factory-like inclusions.</title>
        <authorList>
            <person name="Broering T.J."/>
            <person name="Kim J."/>
            <person name="Miller C.L."/>
            <person name="Piggott C.D."/>
            <person name="Dinoso J.B."/>
            <person name="Nibert M.L."/>
            <person name="Parker J.S.L."/>
        </authorList>
    </citation>
    <scope>INTERACTION WITH PROTEIN MU-NS</scope>
</reference>
<reference key="3">
    <citation type="journal article" date="2005" name="Structure">
        <title>Features of reovirus outer capsid protein mu1 revealed by electron cryomicroscopy and image reconstruction of the virion at 7.0 Angstrom resolution.</title>
        <authorList>
            <person name="Zhang X."/>
            <person name="Ji Y."/>
            <person name="Zhang L."/>
            <person name="Harrison S.C."/>
            <person name="Marinescu D.C."/>
            <person name="Nibert M.L."/>
            <person name="Baker T.S."/>
        </authorList>
    </citation>
    <scope>STRUCTURE BY ELECTRON MICROSCOPY (7.0 ANGSTROMS)</scope>
    <scope>SUBUNIT</scope>
    <scope>FUNCTION</scope>
</reference>
<proteinExistence type="evidence at protein level"/>
<organism>
    <name type="scientific">Reovirus type 1 (strain Lang)</name>
    <name type="common">T1L</name>
    <name type="synonym">Mammalian orthoreovirus 1</name>
    <dbReference type="NCBI Taxonomy" id="10884"/>
    <lineage>
        <taxon>Viruses</taxon>
        <taxon>Riboviria</taxon>
        <taxon>Orthornavirae</taxon>
        <taxon>Duplornaviricota</taxon>
        <taxon>Resentoviricetes</taxon>
        <taxon>Reovirales</taxon>
        <taxon>Spinareoviridae</taxon>
        <taxon>Orthoreovirus</taxon>
        <taxon>Mammalian orthoreovirus</taxon>
    </lineage>
</organism>
<organismHost>
    <name type="scientific">Mammalia</name>
    <dbReference type="NCBI Taxonomy" id="40674"/>
</organismHost>
<gene>
    <name type="primary">L3</name>
</gene>
<feature type="chain" id="PRO_0000344998" description="Inner capsid protein lambda-1">
    <location>
        <begin position="1"/>
        <end position="1275"/>
    </location>
</feature>
<feature type="zinc finger region" description="C2H2-type">
    <location>
        <begin position="181"/>
        <end position="203"/>
    </location>
</feature>
<feature type="region of interest" description="Disordered" evidence="2">
    <location>
        <begin position="1"/>
        <end position="149"/>
    </location>
</feature>
<feature type="compositionally biased region" description="Basic residues" evidence="2">
    <location>
        <begin position="1"/>
        <end position="12"/>
    </location>
</feature>
<feature type="compositionally biased region" description="Basic and acidic residues" evidence="2">
    <location>
        <begin position="18"/>
        <end position="35"/>
    </location>
</feature>
<feature type="compositionally biased region" description="Basic and acidic residues" evidence="2">
    <location>
        <begin position="75"/>
        <end position="117"/>
    </location>
</feature>
<feature type="compositionally biased region" description="Polar residues" evidence="2">
    <location>
        <begin position="118"/>
        <end position="149"/>
    </location>
</feature>
<feature type="turn" evidence="6">
    <location>
        <begin position="303"/>
        <end position="305"/>
    </location>
</feature>
<feature type="strand" evidence="6">
    <location>
        <begin position="310"/>
        <end position="312"/>
    </location>
</feature>
<feature type="turn" evidence="6">
    <location>
        <begin position="333"/>
        <end position="336"/>
    </location>
</feature>
<feature type="helix" evidence="6">
    <location>
        <begin position="351"/>
        <end position="353"/>
    </location>
</feature>
<feature type="helix" evidence="6">
    <location>
        <begin position="356"/>
        <end position="367"/>
    </location>
</feature>
<feature type="strand" evidence="6">
    <location>
        <begin position="377"/>
        <end position="379"/>
    </location>
</feature>
<feature type="strand" evidence="6">
    <location>
        <begin position="391"/>
        <end position="393"/>
    </location>
</feature>
<feature type="helix" evidence="6">
    <location>
        <begin position="399"/>
        <end position="406"/>
    </location>
</feature>
<feature type="helix" evidence="6">
    <location>
        <begin position="418"/>
        <end position="425"/>
    </location>
</feature>
<feature type="strand" evidence="6">
    <location>
        <begin position="428"/>
        <end position="436"/>
    </location>
</feature>
<feature type="strand" evidence="6">
    <location>
        <begin position="440"/>
        <end position="443"/>
    </location>
</feature>
<feature type="strand" evidence="6">
    <location>
        <begin position="446"/>
        <end position="454"/>
    </location>
</feature>
<feature type="helix" evidence="6">
    <location>
        <begin position="456"/>
        <end position="470"/>
    </location>
</feature>
<feature type="helix" evidence="6">
    <location>
        <begin position="478"/>
        <end position="486"/>
    </location>
</feature>
<feature type="turn" evidence="6">
    <location>
        <begin position="487"/>
        <end position="490"/>
    </location>
</feature>
<feature type="helix" evidence="6">
    <location>
        <begin position="511"/>
        <end position="524"/>
    </location>
</feature>
<feature type="helix" evidence="6">
    <location>
        <begin position="532"/>
        <end position="544"/>
    </location>
</feature>
<feature type="helix" evidence="6">
    <location>
        <begin position="552"/>
        <end position="562"/>
    </location>
</feature>
<feature type="strand" evidence="6">
    <location>
        <begin position="569"/>
        <end position="571"/>
    </location>
</feature>
<feature type="helix" evidence="6">
    <location>
        <begin position="573"/>
        <end position="580"/>
    </location>
</feature>
<feature type="helix" evidence="6">
    <location>
        <begin position="592"/>
        <end position="597"/>
    </location>
</feature>
<feature type="strand" evidence="6">
    <location>
        <begin position="601"/>
        <end position="603"/>
    </location>
</feature>
<feature type="strand" evidence="6">
    <location>
        <begin position="605"/>
        <end position="608"/>
    </location>
</feature>
<feature type="helix" evidence="6">
    <location>
        <begin position="624"/>
        <end position="635"/>
    </location>
</feature>
<feature type="helix" evidence="6">
    <location>
        <begin position="636"/>
        <end position="638"/>
    </location>
</feature>
<feature type="helix" evidence="6">
    <location>
        <begin position="644"/>
        <end position="655"/>
    </location>
</feature>
<feature type="strand" evidence="6">
    <location>
        <begin position="657"/>
        <end position="660"/>
    </location>
</feature>
<feature type="turn" evidence="6">
    <location>
        <begin position="667"/>
        <end position="669"/>
    </location>
</feature>
<feature type="turn" evidence="6">
    <location>
        <begin position="675"/>
        <end position="677"/>
    </location>
</feature>
<feature type="helix" evidence="6">
    <location>
        <begin position="681"/>
        <end position="683"/>
    </location>
</feature>
<feature type="helix" evidence="6">
    <location>
        <begin position="686"/>
        <end position="689"/>
    </location>
</feature>
<feature type="helix" evidence="6">
    <location>
        <begin position="691"/>
        <end position="693"/>
    </location>
</feature>
<feature type="turn" evidence="6">
    <location>
        <begin position="696"/>
        <end position="698"/>
    </location>
</feature>
<feature type="helix" evidence="6">
    <location>
        <begin position="700"/>
        <end position="711"/>
    </location>
</feature>
<feature type="strand" evidence="6">
    <location>
        <begin position="717"/>
        <end position="719"/>
    </location>
</feature>
<feature type="helix" evidence="6">
    <location>
        <begin position="724"/>
        <end position="727"/>
    </location>
</feature>
<feature type="strand" evidence="6">
    <location>
        <begin position="732"/>
        <end position="735"/>
    </location>
</feature>
<feature type="strand" evidence="6">
    <location>
        <begin position="739"/>
        <end position="743"/>
    </location>
</feature>
<feature type="helix" evidence="6">
    <location>
        <begin position="760"/>
        <end position="776"/>
    </location>
</feature>
<feature type="turn" evidence="6">
    <location>
        <begin position="779"/>
        <end position="781"/>
    </location>
</feature>
<feature type="helix" evidence="6">
    <location>
        <begin position="782"/>
        <end position="784"/>
    </location>
</feature>
<feature type="helix" evidence="6">
    <location>
        <begin position="787"/>
        <end position="801"/>
    </location>
</feature>
<feature type="helix" evidence="6">
    <location>
        <begin position="807"/>
        <end position="812"/>
    </location>
</feature>
<feature type="helix" evidence="6">
    <location>
        <begin position="814"/>
        <end position="820"/>
    </location>
</feature>
<feature type="helix" evidence="6">
    <location>
        <begin position="840"/>
        <end position="842"/>
    </location>
</feature>
<feature type="strand" evidence="6">
    <location>
        <begin position="844"/>
        <end position="852"/>
    </location>
</feature>
<feature type="helix" evidence="6">
    <location>
        <begin position="860"/>
        <end position="863"/>
    </location>
</feature>
<feature type="turn" evidence="6">
    <location>
        <begin position="864"/>
        <end position="866"/>
    </location>
</feature>
<feature type="strand" evidence="6">
    <location>
        <begin position="874"/>
        <end position="877"/>
    </location>
</feature>
<feature type="helix" evidence="6">
    <location>
        <begin position="880"/>
        <end position="886"/>
    </location>
</feature>
<feature type="helix" evidence="6">
    <location>
        <begin position="897"/>
        <end position="905"/>
    </location>
</feature>
<feature type="turn" evidence="6">
    <location>
        <begin position="906"/>
        <end position="908"/>
    </location>
</feature>
<feature type="helix" evidence="6">
    <location>
        <begin position="913"/>
        <end position="934"/>
    </location>
</feature>
<feature type="strand" evidence="6">
    <location>
        <begin position="936"/>
        <end position="939"/>
    </location>
</feature>
<feature type="helix" evidence="6">
    <location>
        <begin position="959"/>
        <end position="976"/>
    </location>
</feature>
<feature type="helix" evidence="6">
    <location>
        <begin position="985"/>
        <end position="988"/>
    </location>
</feature>
<feature type="strand" evidence="6">
    <location>
        <begin position="997"/>
        <end position="1003"/>
    </location>
</feature>
<feature type="strand" evidence="6">
    <location>
        <begin position="1008"/>
        <end position="1011"/>
    </location>
</feature>
<feature type="helix" evidence="6">
    <location>
        <begin position="1019"/>
        <end position="1031"/>
    </location>
</feature>
<feature type="turn" evidence="6">
    <location>
        <begin position="1032"/>
        <end position="1034"/>
    </location>
</feature>
<feature type="helix" evidence="6">
    <location>
        <begin position="1035"/>
        <end position="1038"/>
    </location>
</feature>
<feature type="strand" evidence="6">
    <location>
        <begin position="1040"/>
        <end position="1052"/>
    </location>
</feature>
<feature type="helix" evidence="6">
    <location>
        <begin position="1063"/>
        <end position="1065"/>
    </location>
</feature>
<feature type="strand" evidence="6">
    <location>
        <begin position="1069"/>
        <end position="1071"/>
    </location>
</feature>
<feature type="strand" evidence="6">
    <location>
        <begin position="1074"/>
        <end position="1076"/>
    </location>
</feature>
<feature type="strand" evidence="6">
    <location>
        <begin position="1082"/>
        <end position="1084"/>
    </location>
</feature>
<feature type="strand" evidence="6">
    <location>
        <begin position="1088"/>
        <end position="1090"/>
    </location>
</feature>
<feature type="strand" evidence="6">
    <location>
        <begin position="1093"/>
        <end position="1095"/>
    </location>
</feature>
<feature type="strand" evidence="6">
    <location>
        <begin position="1097"/>
        <end position="1099"/>
    </location>
</feature>
<feature type="strand" evidence="6">
    <location>
        <begin position="1106"/>
        <end position="1111"/>
    </location>
</feature>
<feature type="helix" evidence="6">
    <location>
        <begin position="1112"/>
        <end position="1131"/>
    </location>
</feature>
<feature type="strand" evidence="6">
    <location>
        <begin position="1135"/>
        <end position="1146"/>
    </location>
</feature>
<feature type="strand" evidence="6">
    <location>
        <begin position="1149"/>
        <end position="1151"/>
    </location>
</feature>
<feature type="strand" evidence="6">
    <location>
        <begin position="1157"/>
        <end position="1159"/>
    </location>
</feature>
<feature type="helix" evidence="6">
    <location>
        <begin position="1163"/>
        <end position="1168"/>
    </location>
</feature>
<feature type="strand" evidence="6">
    <location>
        <begin position="1181"/>
        <end position="1183"/>
    </location>
</feature>
<feature type="strand" evidence="6">
    <location>
        <begin position="1195"/>
        <end position="1203"/>
    </location>
</feature>
<feature type="strand" evidence="6">
    <location>
        <begin position="1220"/>
        <end position="1222"/>
    </location>
</feature>
<feature type="helix" evidence="6">
    <location>
        <begin position="1233"/>
        <end position="1236"/>
    </location>
</feature>
<feature type="strand" evidence="6">
    <location>
        <begin position="1242"/>
        <end position="1244"/>
    </location>
</feature>
<feature type="turn" evidence="6">
    <location>
        <begin position="1247"/>
        <end position="1249"/>
    </location>
</feature>
<feature type="strand" evidence="6">
    <location>
        <begin position="1253"/>
        <end position="1260"/>
    </location>
</feature>
<feature type="turn" evidence="6">
    <location>
        <begin position="1267"/>
        <end position="1270"/>
    </location>
</feature>
<evidence type="ECO:0000250" key="1">
    <source>
        <dbReference type="UniProtKB" id="P15024"/>
    </source>
</evidence>
<evidence type="ECO:0000256" key="2">
    <source>
        <dbReference type="SAM" id="MobiDB-lite"/>
    </source>
</evidence>
<evidence type="ECO:0000269" key="3">
    <source>
    </source>
</evidence>
<evidence type="ECO:0000269" key="4">
    <source>
    </source>
</evidence>
<evidence type="ECO:0000305" key="5"/>
<evidence type="ECO:0007829" key="6">
    <source>
        <dbReference type="PDB" id="6ZTS"/>
    </source>
</evidence>
<dbReference type="EC" id="3.6.4.13"/>
<dbReference type="EMBL" id="AF129820">
    <property type="protein sequence ID" value="AAD42304.1"/>
    <property type="molecule type" value="mRNA"/>
</dbReference>
<dbReference type="PDB" id="2CSE">
    <property type="method" value="EM"/>
    <property type="resolution" value="7.00 A"/>
    <property type="chains" value="V/W=1-1275"/>
</dbReference>
<dbReference type="PDB" id="6XF7">
    <property type="method" value="EM"/>
    <property type="resolution" value="6.60 A"/>
    <property type="chains" value="B/C=217-1275"/>
</dbReference>
<dbReference type="PDB" id="6XF8">
    <property type="method" value="EM"/>
    <property type="resolution" value="6.50 A"/>
    <property type="chains" value="B/C=217-1275"/>
</dbReference>
<dbReference type="PDB" id="6ZTS">
    <property type="method" value="EM"/>
    <property type="chains" value="A/B=301-1275"/>
</dbReference>
<dbReference type="PDBsum" id="2CSE"/>
<dbReference type="PDBsum" id="6XF7"/>
<dbReference type="PDBsum" id="6XF8"/>
<dbReference type="PDBsum" id="6ZTS"/>
<dbReference type="EMDB" id="EMD-22166"/>
<dbReference type="SMR" id="Q9WAB2"/>
<dbReference type="EvolutionaryTrace" id="Q9WAB2"/>
<dbReference type="Proteomes" id="UP000007253">
    <property type="component" value="Genome"/>
</dbReference>
<dbReference type="GO" id="GO:0039625">
    <property type="term" value="C:viral inner capsid"/>
    <property type="evidence" value="ECO:0007669"/>
    <property type="project" value="UniProtKB-KW"/>
</dbReference>
<dbReference type="GO" id="GO:0005524">
    <property type="term" value="F:ATP binding"/>
    <property type="evidence" value="ECO:0007669"/>
    <property type="project" value="UniProtKB-KW"/>
</dbReference>
<dbReference type="GO" id="GO:0016887">
    <property type="term" value="F:ATP hydrolysis activity"/>
    <property type="evidence" value="ECO:0007669"/>
    <property type="project" value="RHEA"/>
</dbReference>
<dbReference type="GO" id="GO:0003724">
    <property type="term" value="F:RNA helicase activity"/>
    <property type="evidence" value="ECO:0007669"/>
    <property type="project" value="UniProtKB-EC"/>
</dbReference>
<dbReference type="GO" id="GO:0008270">
    <property type="term" value="F:zinc ion binding"/>
    <property type="evidence" value="ECO:0007669"/>
    <property type="project" value="UniProtKB-KW"/>
</dbReference>
<dbReference type="GO" id="GO:0006370">
    <property type="term" value="P:7-methylguanosine mRNA capping"/>
    <property type="evidence" value="ECO:0007669"/>
    <property type="project" value="UniProtKB-KW"/>
</dbReference>
<dbReference type="Gene3D" id="3.90.1830.10">
    <property type="entry name" value="Inner capsid protein lambda-1"/>
    <property type="match status" value="1"/>
</dbReference>
<dbReference type="InterPro" id="IPR054176">
    <property type="entry name" value="Lamba1_VP3"/>
</dbReference>
<dbReference type="InterPro" id="IPR044949">
    <property type="entry name" value="Lambda-1/VP3_sf"/>
</dbReference>
<dbReference type="InterPro" id="IPR013087">
    <property type="entry name" value="Znf_C2H2_type"/>
</dbReference>
<dbReference type="Pfam" id="PF22033">
    <property type="entry name" value="Lamba1_VP3"/>
    <property type="match status" value="1"/>
</dbReference>
<dbReference type="PROSITE" id="PS00028">
    <property type="entry name" value="ZINC_FINGER_C2H2_1"/>
    <property type="match status" value="1"/>
</dbReference>
<name>CAPSD_REOVL</name>
<comment type="function">
    <text evidence="4">Inner capsid protein that self-assembles to form an icosahedral capsid with a T=2 symmetry, which consists of 120 copies of VP2, with channels at each of its five-fold vertices. This capsid constitutes the innermost concentric layer of the viral mature particle.</text>
</comment>
<comment type="function">
    <text evidence="1">Displays NTPase, RNA 5'-triphosphatase (RTPase) and RNA helicase activities and probably participates in transcription of the viral genome. Helicase activity might be involved in unwinding or reannealing dsRNA during RNA synthesis. RTPase enzymatic activity represents the first step in RNA capping, which yields a 5'-diphosphorylated plus-strand RNA.</text>
</comment>
<comment type="catalytic activity">
    <reaction evidence="1">
        <text>ATP + H2O = ADP + phosphate + H(+)</text>
        <dbReference type="Rhea" id="RHEA:13065"/>
        <dbReference type="ChEBI" id="CHEBI:15377"/>
        <dbReference type="ChEBI" id="CHEBI:15378"/>
        <dbReference type="ChEBI" id="CHEBI:30616"/>
        <dbReference type="ChEBI" id="CHEBI:43474"/>
        <dbReference type="ChEBI" id="CHEBI:456216"/>
        <dbReference type="EC" id="3.6.4.13"/>
    </reaction>
</comment>
<comment type="cofactor">
    <cofactor evidence="1">
        <name>Mg(2+)</name>
        <dbReference type="ChEBI" id="CHEBI:18420"/>
    </cofactor>
    <cofactor evidence="1">
        <name>Mn(2+)</name>
        <dbReference type="ChEBI" id="CHEBI:29035"/>
    </cofactor>
</comment>
<comment type="subunit">
    <text evidence="3 4">Homodecamer; each decamer is made up of two conformers of VP2, called VP2A and VP2B (PubMed:16216585). 12 homodecamers assemble to form an icosahedral capsid (PubMed:16216585). Interacts with protein mu-NS; in viral inclusions (PubMed:14747553).</text>
</comment>
<comment type="subcellular location">
    <subcellularLocation>
        <location evidence="4">Virion</location>
    </subcellularLocation>
    <text evidence="4">Found in the inner capsid (120 copies).</text>
</comment>
<comment type="similarity">
    <text evidence="5">Belongs to the turreted BTV-fold inner capsid family.</text>
</comment>
<keyword id="KW-0002">3D-structure</keyword>
<keyword id="KW-0067">ATP-binding</keyword>
<keyword id="KW-0167">Capsid protein</keyword>
<keyword id="KW-0347">Helicase</keyword>
<keyword id="KW-0378">Hydrolase</keyword>
<keyword id="KW-1153">Inner capsid protein</keyword>
<keyword id="KW-0479">Metal-binding</keyword>
<keyword id="KW-0506">mRNA capping</keyword>
<keyword id="KW-0507">mRNA processing</keyword>
<keyword id="KW-0547">Nucleotide-binding</keyword>
<keyword id="KW-1185">Reference proteome</keyword>
<keyword id="KW-1141">T=2 icosahedral capsid protein</keyword>
<keyword id="KW-0946">Virion</keyword>
<keyword id="KW-0862">Zinc</keyword>
<keyword id="KW-0863">Zinc-finger</keyword>